<organism>
    <name type="scientific">Physcomitrium patens</name>
    <name type="common">Spreading-leaved earth moss</name>
    <name type="synonym">Physcomitrella patens</name>
    <dbReference type="NCBI Taxonomy" id="3218"/>
    <lineage>
        <taxon>Eukaryota</taxon>
        <taxon>Viridiplantae</taxon>
        <taxon>Streptophyta</taxon>
        <taxon>Embryophyta</taxon>
        <taxon>Bryophyta</taxon>
        <taxon>Bryophytina</taxon>
        <taxon>Bryopsida</taxon>
        <taxon>Funariidae</taxon>
        <taxon>Funariales</taxon>
        <taxon>Funariaceae</taxon>
        <taxon>Physcomitrium</taxon>
    </lineage>
</organism>
<proteinExistence type="inferred from homology"/>
<comment type="function">
    <text evidence="1">GTPase involved in protein precursor import into chloroplasts. Seems to recognize chloroplast-destined precursor proteins and regulate their presentation to the translocation channel through GTP hydrolysis. Probably specialized in the import of nuclear encoded non-photosynthetic preproteins from the cytoplasm to the chloroplast.</text>
</comment>
<comment type="cofactor">
    <cofactor evidence="2">
        <name>Mg(2+)</name>
        <dbReference type="ChEBI" id="CHEBI:18420"/>
    </cofactor>
    <text evidence="2">Binds 1 Mg(2+) ion by subunit.</text>
</comment>
<comment type="subunit">
    <text evidence="1">Part of the TOC core complex.</text>
</comment>
<comment type="subcellular location">
    <subcellularLocation>
        <location evidence="6">Plastid</location>
        <location evidence="6">Chloroplast outer membrane</location>
        <topology evidence="3">Single-pass membrane protein</topology>
    </subcellularLocation>
</comment>
<comment type="similarity">
    <text evidence="6">Belongs to the TRAFAC class TrmE-Era-EngA-EngB-Septin-like GTPase superfamily. AIG1/Toc34/Toc159-like paraseptin GTPase family. TOC159 subfamily.</text>
</comment>
<reference key="1">
    <citation type="journal article" date="2008" name="Science">
        <title>The Physcomitrella genome reveals evolutionary insights into the conquest of land by plants.</title>
        <authorList>
            <person name="Rensing S.A."/>
            <person name="Lang D."/>
            <person name="Zimmer A.D."/>
            <person name="Terry A."/>
            <person name="Salamov A."/>
            <person name="Shapiro H."/>
            <person name="Nishiyama T."/>
            <person name="Perroud P.-F."/>
            <person name="Lindquist E.A."/>
            <person name="Kamisugi Y."/>
            <person name="Tanahashi T."/>
            <person name="Sakakibara K."/>
            <person name="Fujita T."/>
            <person name="Oishi K."/>
            <person name="Shin-I T."/>
            <person name="Kuroki Y."/>
            <person name="Toyoda A."/>
            <person name="Suzuki Y."/>
            <person name="Hashimoto S.-I."/>
            <person name="Yamaguchi K."/>
            <person name="Sugano S."/>
            <person name="Kohara Y."/>
            <person name="Fujiyama A."/>
            <person name="Anterola A."/>
            <person name="Aoki S."/>
            <person name="Ashton N."/>
            <person name="Barbazuk W.B."/>
            <person name="Barker E."/>
            <person name="Bennetzen J.L."/>
            <person name="Blankenship R."/>
            <person name="Cho S.H."/>
            <person name="Dutcher S.K."/>
            <person name="Estelle M."/>
            <person name="Fawcett J.A."/>
            <person name="Gundlach H."/>
            <person name="Hanada K."/>
            <person name="Heyl A."/>
            <person name="Hicks K.A."/>
            <person name="Hughes J."/>
            <person name="Lohr M."/>
            <person name="Mayer K."/>
            <person name="Melkozernov A."/>
            <person name="Murata T."/>
            <person name="Nelson D.R."/>
            <person name="Pils B."/>
            <person name="Prigge M."/>
            <person name="Reiss B."/>
            <person name="Renner T."/>
            <person name="Rombauts S."/>
            <person name="Rushton P.J."/>
            <person name="Sanderfoot A."/>
            <person name="Schween G."/>
            <person name="Shiu S.-H."/>
            <person name="Stueber K."/>
            <person name="Theodoulou F.L."/>
            <person name="Tu H."/>
            <person name="Van de Peer Y."/>
            <person name="Verrier P.J."/>
            <person name="Waters E."/>
            <person name="Wood A."/>
            <person name="Yang L."/>
            <person name="Cove D."/>
            <person name="Cuming A.C."/>
            <person name="Hasebe M."/>
            <person name="Lucas S."/>
            <person name="Mishler B.D."/>
            <person name="Reski R."/>
            <person name="Grigoriev I.V."/>
            <person name="Quatrano R.S."/>
            <person name="Boore J.L."/>
        </authorList>
    </citation>
    <scope>NUCLEOTIDE SEQUENCE [LARGE SCALE GENOMIC DNA]</scope>
    <source>
        <strain>cv. Gransden 2004</strain>
    </source>
</reference>
<protein>
    <recommendedName>
        <fullName evidence="6">Translocase of chloroplast 101, chloroplastic</fullName>
        <ecNumber evidence="6">3.6.5.-</ecNumber>
    </recommendedName>
    <alternativeName>
        <fullName evidence="6">101 kDa chloroplast outer envelope protein</fullName>
    </alternativeName>
</protein>
<dbReference type="EC" id="3.6.5.-" evidence="6"/>
<dbReference type="EMBL" id="DS545012">
    <property type="protein sequence ID" value="EDQ64902.1"/>
    <property type="molecule type" value="Genomic_DNA"/>
</dbReference>
<dbReference type="RefSeq" id="XP_001770227.1">
    <property type="nucleotide sequence ID" value="XM_001770175.1"/>
</dbReference>
<dbReference type="SMR" id="A9SV59"/>
<dbReference type="FunCoup" id="A9SV59">
    <property type="interactions" value="2521"/>
</dbReference>
<dbReference type="eggNOG" id="ENOG502QR60">
    <property type="taxonomic scope" value="Eukaryota"/>
</dbReference>
<dbReference type="HOGENOM" id="CLU_003856_0_1_1"/>
<dbReference type="InParanoid" id="A9SV59"/>
<dbReference type="Proteomes" id="UP000006727">
    <property type="component" value="Unplaced"/>
</dbReference>
<dbReference type="GO" id="GO:0009707">
    <property type="term" value="C:chloroplast outer membrane"/>
    <property type="evidence" value="ECO:0000318"/>
    <property type="project" value="GO_Central"/>
</dbReference>
<dbReference type="GO" id="GO:0005525">
    <property type="term" value="F:GTP binding"/>
    <property type="evidence" value="ECO:0007669"/>
    <property type="project" value="UniProtKB-KW"/>
</dbReference>
<dbReference type="GO" id="GO:0003924">
    <property type="term" value="F:GTPase activity"/>
    <property type="evidence" value="ECO:0007669"/>
    <property type="project" value="InterPro"/>
</dbReference>
<dbReference type="GO" id="GO:0046872">
    <property type="term" value="F:metal ion binding"/>
    <property type="evidence" value="ECO:0007669"/>
    <property type="project" value="UniProtKB-KW"/>
</dbReference>
<dbReference type="GO" id="GO:0045036">
    <property type="term" value="P:protein targeting to chloroplast"/>
    <property type="evidence" value="ECO:0000318"/>
    <property type="project" value="GO_Central"/>
</dbReference>
<dbReference type="GO" id="GO:0015031">
    <property type="term" value="P:protein transport"/>
    <property type="evidence" value="ECO:0007669"/>
    <property type="project" value="UniProtKB-KW"/>
</dbReference>
<dbReference type="CDD" id="cd01853">
    <property type="entry name" value="Toc34_like"/>
    <property type="match status" value="1"/>
</dbReference>
<dbReference type="FunFam" id="3.40.50.300:FF:000413">
    <property type="entry name" value="Translocase of chloroplast 120, chloroplastic"/>
    <property type="match status" value="1"/>
</dbReference>
<dbReference type="Gene3D" id="3.40.50.300">
    <property type="entry name" value="P-loop containing nucleotide triphosphate hydrolases"/>
    <property type="match status" value="1"/>
</dbReference>
<dbReference type="InterPro" id="IPR006703">
    <property type="entry name" value="G_AIG1"/>
</dbReference>
<dbReference type="InterPro" id="IPR045058">
    <property type="entry name" value="GIMA/IAN/Toc"/>
</dbReference>
<dbReference type="InterPro" id="IPR027417">
    <property type="entry name" value="P-loop_NTPase"/>
</dbReference>
<dbReference type="InterPro" id="IPR024283">
    <property type="entry name" value="TOC159_MAD"/>
</dbReference>
<dbReference type="InterPro" id="IPR005690">
    <property type="entry name" value="Toc86_159"/>
</dbReference>
<dbReference type="NCBIfam" id="TIGR00993">
    <property type="entry name" value="3a0901s04IAP86"/>
    <property type="match status" value="1"/>
</dbReference>
<dbReference type="PANTHER" id="PTHR10903">
    <property type="entry name" value="GTPASE, IMAP FAMILY MEMBER-RELATED"/>
    <property type="match status" value="1"/>
</dbReference>
<dbReference type="PANTHER" id="PTHR10903:SF135">
    <property type="entry name" value="TRANSLOCASE OF CHLOROPLAST 120, CHLOROPLASTIC-RELATED"/>
    <property type="match status" value="1"/>
</dbReference>
<dbReference type="Pfam" id="PF04548">
    <property type="entry name" value="AIG1"/>
    <property type="match status" value="1"/>
</dbReference>
<dbReference type="Pfam" id="PF11886">
    <property type="entry name" value="TOC159_MAD"/>
    <property type="match status" value="1"/>
</dbReference>
<dbReference type="SUPFAM" id="SSF52540">
    <property type="entry name" value="P-loop containing nucleoside triphosphate hydrolases"/>
    <property type="match status" value="1"/>
</dbReference>
<dbReference type="PROSITE" id="PS51720">
    <property type="entry name" value="G_AIG1"/>
    <property type="match status" value="1"/>
</dbReference>
<evidence type="ECO:0000250" key="1">
    <source>
        <dbReference type="UniProtKB" id="A9SY64"/>
    </source>
</evidence>
<evidence type="ECO:0000250" key="2">
    <source>
        <dbReference type="UniProtKB" id="O23680"/>
    </source>
</evidence>
<evidence type="ECO:0000255" key="3"/>
<evidence type="ECO:0000255" key="4">
    <source>
        <dbReference type="PROSITE-ProRule" id="PRU01057"/>
    </source>
</evidence>
<evidence type="ECO:0000256" key="5">
    <source>
        <dbReference type="SAM" id="MobiDB-lite"/>
    </source>
</evidence>
<evidence type="ECO:0000305" key="6"/>
<evidence type="ECO:0000312" key="7">
    <source>
        <dbReference type="EMBL" id="EDQ64902.1"/>
    </source>
</evidence>
<gene>
    <name evidence="6" type="primary">TOC101</name>
    <name evidence="7" type="ORF">PHYPADRAFT_216050</name>
</gene>
<sequence length="919" mass="100683">MDVENRECSADLAEELRKLSASRSLSEEVGVDPALVSEGAPEGVIEGPAVVSSPAKMYTALKAVDDEMPPLKSENKAVVETEKVESKPRGFSAIDFAEEDGDSDADAEDEDDEDDEDDDEDDDDEDDKDMVTAKALAELANASGKKSSMGAAGPSLPSLPQRPAVRKTAAATALDTAGRITQRPNGAPSTQLTATTEENANSDTAEGNETREKLQNIRVKFLRLAHRLGQSPQNVVVAQVLYRLGLAESLRGGNTSNRAGAFSFDRANALAEEQEAANQEEELDFACTILVLGKTGVGKSATINSIFDDRKSVTSAFKPSTNKVQEIVGTVHGIKVRVIDTPGLLPSVADQQHNERIMGQVKKHIKKASPDIVLYFDRLDMQSRDFGDLPLLKTITDLFGAAVWFNAIVVLTHASSAPPDGPNGVPLSYEMFVAQRSHVVQQTIRQAAGDMRLMNPVSLVENHPACRTNRNGQRVLPNGQIWKPQLLLLCFASKILAEANSLLKLQETATPGRPFGQRSRVPPLPFLLSSLLQSRAQLKLPDEQLDESDESDDDEEEEDSEADDYDELPPFRPLSKEELEELTKEQRQDYMDELADRERLFQKKQYREEMRRRKEMKKRQAQMSKEELAQPDEADDEAGQPAAVPVPMPDMALPPSFDSDNPTHRYRYLETANQWLVRPVLETHGWDHDAGYDGFNVEKMFVVKNKIPASISGQVTKDKKESQVNFEAAASLKHGEGKVTLTGFDVQTIGKDLAYTLRAETRFNNFKRNKTTAGVTATYLNDTIAAGVKLEDRILIGKRVKMVVNGGVLTGKGDKAFGGSLEATLRGKEYPLSRTLSTLGLSVMDWHGDLAIGGNLQSQFMVGKTMMVGRANLNNRGSGQVSIRASSSEQLQMVLIGIVPILRSLINCRFGFGGGQSSQ</sequence>
<keyword id="KW-0150">Chloroplast</keyword>
<keyword id="KW-0342">GTP-binding</keyword>
<keyword id="KW-0378">Hydrolase</keyword>
<keyword id="KW-0460">Magnesium</keyword>
<keyword id="KW-0472">Membrane</keyword>
<keyword id="KW-0479">Metal-binding</keyword>
<keyword id="KW-0547">Nucleotide-binding</keyword>
<keyword id="KW-0934">Plastid</keyword>
<keyword id="KW-1002">Plastid outer membrane</keyword>
<keyword id="KW-0653">Protein transport</keyword>
<keyword id="KW-1185">Reference proteome</keyword>
<keyword id="KW-0812">Transmembrane</keyword>
<keyword id="KW-1133">Transmembrane helix</keyword>
<keyword id="KW-0813">Transport</keyword>
<name>TC101_PHYPA</name>
<feature type="chain" id="PRO_0000451561" description="Translocase of chloroplast 101, chloroplastic">
    <location>
        <begin position="1"/>
        <end position="919"/>
    </location>
</feature>
<feature type="transmembrane region" description="Helical" evidence="3">
    <location>
        <begin position="893"/>
        <end position="914"/>
    </location>
</feature>
<feature type="domain" description="AIG1-type G" evidence="4">
    <location>
        <begin position="284"/>
        <end position="513"/>
    </location>
</feature>
<feature type="region of interest" description="Disordered" evidence="5">
    <location>
        <begin position="20"/>
        <end position="47"/>
    </location>
</feature>
<feature type="region of interest" description="Disordered" evidence="5">
    <location>
        <begin position="64"/>
        <end position="211"/>
    </location>
</feature>
<feature type="region of interest" description="G1" evidence="4">
    <location>
        <begin position="293"/>
        <end position="300"/>
    </location>
</feature>
<feature type="region of interest" description="G2" evidence="4">
    <location>
        <begin position="319"/>
        <end position="323"/>
    </location>
</feature>
<feature type="region of interest" description="G3" evidence="4">
    <location>
        <begin position="340"/>
        <end position="343"/>
    </location>
</feature>
<feature type="region of interest" description="G4" evidence="4">
    <location>
        <begin position="412"/>
        <end position="415"/>
    </location>
</feature>
<feature type="region of interest" description="G5" evidence="4">
    <location>
        <begin position="461"/>
        <end position="463"/>
    </location>
</feature>
<feature type="region of interest" description="Disordered" evidence="5">
    <location>
        <begin position="540"/>
        <end position="585"/>
    </location>
</feature>
<feature type="region of interest" description="Disordered" evidence="5">
    <location>
        <begin position="611"/>
        <end position="650"/>
    </location>
</feature>
<feature type="compositionally biased region" description="Basic and acidic residues" evidence="5">
    <location>
        <begin position="73"/>
        <end position="88"/>
    </location>
</feature>
<feature type="compositionally biased region" description="Acidic residues" evidence="5">
    <location>
        <begin position="96"/>
        <end position="128"/>
    </location>
</feature>
<feature type="compositionally biased region" description="Polar residues" evidence="5">
    <location>
        <begin position="182"/>
        <end position="207"/>
    </location>
</feature>
<feature type="compositionally biased region" description="Acidic residues" evidence="5">
    <location>
        <begin position="543"/>
        <end position="567"/>
    </location>
</feature>
<feature type="compositionally biased region" description="Basic and acidic residues" evidence="5">
    <location>
        <begin position="574"/>
        <end position="585"/>
    </location>
</feature>
<feature type="compositionally biased region" description="Acidic residues" evidence="5">
    <location>
        <begin position="629"/>
        <end position="638"/>
    </location>
</feature>
<feature type="compositionally biased region" description="Low complexity" evidence="5">
    <location>
        <begin position="641"/>
        <end position="650"/>
    </location>
</feature>
<feature type="binding site" evidence="2">
    <location>
        <begin position="296"/>
        <end position="301"/>
    </location>
    <ligand>
        <name>GTP</name>
        <dbReference type="ChEBI" id="CHEBI:37565"/>
    </ligand>
</feature>
<feature type="binding site" evidence="2">
    <location>
        <position position="300"/>
    </location>
    <ligand>
        <name>Mg(2+)</name>
        <dbReference type="ChEBI" id="CHEBI:18420"/>
    </ligand>
</feature>
<feature type="binding site" evidence="2">
    <location>
        <position position="413"/>
    </location>
    <ligand>
        <name>GTP</name>
        <dbReference type="ChEBI" id="CHEBI:37565"/>
    </ligand>
</feature>
<feature type="binding site" evidence="2">
    <location>
        <begin position="461"/>
        <end position="462"/>
    </location>
    <ligand>
        <name>GTP</name>
        <dbReference type="ChEBI" id="CHEBI:37565"/>
    </ligand>
</feature>
<accession>A9SV59</accession>